<protein>
    <recommendedName>
        <fullName>Pregnancy-associated glycoprotein 72</fullName>
        <ecNumber>3.4.23.-</ecNumber>
    </recommendedName>
    <alternativeName>
        <fullName>AmbPAG 72 kDa</fullName>
    </alternativeName>
</protein>
<evidence type="ECO:0000255" key="1"/>
<evidence type="ECO:0000269" key="2">
    <source>
    </source>
</evidence>
<keyword id="KW-0064">Aspartyl protease</keyword>
<keyword id="KW-0903">Direct protein sequencing</keyword>
<keyword id="KW-0325">Glycoprotein</keyword>
<keyword id="KW-0378">Hydrolase</keyword>
<keyword id="KW-0645">Protease</keyword>
<keyword id="KW-0964">Secreted</keyword>
<accession>P84916</accession>
<dbReference type="EC" id="3.4.23.-"/>
<dbReference type="GO" id="GO:0005576">
    <property type="term" value="C:extracellular region"/>
    <property type="evidence" value="ECO:0007669"/>
    <property type="project" value="UniProtKB-SubCell"/>
</dbReference>
<dbReference type="GO" id="GO:0004190">
    <property type="term" value="F:aspartic-type endopeptidase activity"/>
    <property type="evidence" value="ECO:0007669"/>
    <property type="project" value="UniProtKB-KW"/>
</dbReference>
<dbReference type="GO" id="GO:0006508">
    <property type="term" value="P:proteolysis"/>
    <property type="evidence" value="ECO:0007669"/>
    <property type="project" value="UniProtKB-KW"/>
</dbReference>
<comment type="subcellular location">
    <subcellularLocation>
        <location>Secreted</location>
        <location>Extracellular space</location>
    </subcellularLocation>
</comment>
<comment type="tissue specificity">
    <text evidence="2">Expressed in chorionic epithelium (trophectoderm).</text>
</comment>
<comment type="developmental stage">
    <text evidence="2">Expressed between month 3 and month 4 of pregnancy.</text>
</comment>
<comment type="PTM">
    <text evidence="2">N-glycosylated.</text>
</comment>
<comment type="similarity">
    <text evidence="1">Belongs to the peptidase A1 family.</text>
</comment>
<name>PAG72_BISBI</name>
<proteinExistence type="evidence at protein level"/>
<reference key="1">
    <citation type="journal article" date="2008" name="Gen. Comp. Endocrinol.">
        <title>Isolation of pregnancy-associated glycoproteins from placenta of the American bison (Bison bison) at first half of pregnancy.</title>
        <authorList>
            <person name="Kiewisz J."/>
            <person name="Melo de Sousa N."/>
            <person name="Beckers J.-F.M.P."/>
            <person name="Vervaecke H."/>
            <person name="Panasiewicz G."/>
            <person name="Szafranska B."/>
        </authorList>
    </citation>
    <scope>PROTEIN SEQUENCE</scope>
    <scope>TISSUE SPECIFICITY</scope>
    <scope>DEVELOPMENTAL STAGE</scope>
    <scope>GLYCOSYLATION</scope>
    <source>
        <tissue>Placenta</tissue>
    </source>
</reference>
<sequence length="25" mass="2705">RGSNLTSLPLQNVIDLFYVGNITIG</sequence>
<organism>
    <name type="scientific">Bison bison</name>
    <name type="common">American bison</name>
    <name type="synonym">Bos bison</name>
    <dbReference type="NCBI Taxonomy" id="9901"/>
    <lineage>
        <taxon>Eukaryota</taxon>
        <taxon>Metazoa</taxon>
        <taxon>Chordata</taxon>
        <taxon>Craniata</taxon>
        <taxon>Vertebrata</taxon>
        <taxon>Euteleostomi</taxon>
        <taxon>Mammalia</taxon>
        <taxon>Eutheria</taxon>
        <taxon>Laurasiatheria</taxon>
        <taxon>Artiodactyla</taxon>
        <taxon>Ruminantia</taxon>
        <taxon>Pecora</taxon>
        <taxon>Bovidae</taxon>
        <taxon>Bovinae</taxon>
        <taxon>Bison</taxon>
    </lineage>
</organism>
<feature type="chain" id="PRO_0000249180" description="Pregnancy-associated glycoprotein 72">
    <location>
        <begin position="1"/>
        <end position="25" status="greater than"/>
    </location>
</feature>
<feature type="glycosylation site" description="N-linked (GlcNAc...) asparagine" evidence="1">
    <location>
        <position position="4"/>
    </location>
</feature>
<feature type="glycosylation site" description="N-linked (GlcNAc...) asparagine" evidence="1">
    <location>
        <position position="21"/>
    </location>
</feature>
<feature type="non-terminal residue">
    <location>
        <position position="25"/>
    </location>
</feature>